<sequence length="427" mass="48299">MSHWFHRNPIKPTEFVKFDLKGVLTTDTCSKICGELRLRRDKLVSQFKNASNDLEEVTKEFNEYLRLFAGFLIEIQSSMVELENKDAGNKNSKLIPLIRFKWGNSMLPQAATEVSDTWFEALSMIQCMAMWLTKHAASMAGKDEVRESDAKECLQCLRQAGGMFQYVKDESSRLSGANEVEGSDFDPKVMETYILTATAEAQEVIVARAIEMKHDDGLISSLAAVTASIFSKADQCLNNLPDESFARWRRYLQLKHHFYLAYAFAFLGQKQLSEDKCGEAVRACKQGIAEYGVAKEMAAMYATATGPGTRIKPEQHLFFRRIEPLLNRHLEKAERENGFIYHQKVPDEIPQLDVEATYGLAKLDSFTYPPPAESWNTAVYSAFDLSKANMPDFSKIKKSKSKLDPVHEEKIYQTEKDPSNSSGCVIA</sequence>
<proteinExistence type="inferred from homology"/>
<dbReference type="EMBL" id="FO080216">
    <property type="protein sequence ID" value="CCD62069.1"/>
    <property type="molecule type" value="Genomic_DNA"/>
</dbReference>
<dbReference type="PIR" id="T25472">
    <property type="entry name" value="T25472"/>
</dbReference>
<dbReference type="RefSeq" id="NP_001370343.1">
    <property type="nucleotide sequence ID" value="NM_001383358.2"/>
</dbReference>
<dbReference type="RefSeq" id="NP_505261.2">
    <property type="nucleotide sequence ID" value="NM_072860.5"/>
</dbReference>
<dbReference type="SMR" id="Q22885"/>
<dbReference type="BioGRID" id="44294">
    <property type="interactions" value="4"/>
</dbReference>
<dbReference type="FunCoup" id="Q22885">
    <property type="interactions" value="2798"/>
</dbReference>
<dbReference type="STRING" id="6239.B0507.2.1"/>
<dbReference type="PaxDb" id="6239-B0507.2"/>
<dbReference type="PeptideAtlas" id="Q22885"/>
<dbReference type="EnsemblMetazoa" id="B0507.2.1">
    <property type="protein sequence ID" value="B0507.2.1"/>
    <property type="gene ID" value="WBGene00015219"/>
</dbReference>
<dbReference type="GeneID" id="179255"/>
<dbReference type="UCSC" id="B0507.2">
    <property type="organism name" value="c. elegans"/>
</dbReference>
<dbReference type="AGR" id="WB:WBGene00015219"/>
<dbReference type="WormBase" id="B0507.2">
    <property type="protein sequence ID" value="CE32561"/>
    <property type="gene ID" value="WBGene00015219"/>
</dbReference>
<dbReference type="eggNOG" id="KOG2220">
    <property type="taxonomic scope" value="Eukaryota"/>
</dbReference>
<dbReference type="GeneTree" id="ENSGT00390000006681"/>
<dbReference type="HOGENOM" id="CLU_056561_0_0_1"/>
<dbReference type="InParanoid" id="Q22885"/>
<dbReference type="OMA" id="YNYCGEN"/>
<dbReference type="OrthoDB" id="10266451at2759"/>
<dbReference type="PhylomeDB" id="Q22885"/>
<dbReference type="PRO" id="PR:Q22885"/>
<dbReference type="Proteomes" id="UP000001940">
    <property type="component" value="Chromosome V"/>
</dbReference>
<dbReference type="Bgee" id="WBGene00015219">
    <property type="expression patterns" value="Expressed in pharyngeal muscle cell (C elegans) and 3 other cell types or tissues"/>
</dbReference>
<dbReference type="CDD" id="cd09243">
    <property type="entry name" value="BRO1_Brox_like"/>
    <property type="match status" value="1"/>
</dbReference>
<dbReference type="Gene3D" id="1.25.40.280">
    <property type="entry name" value="alix/aip1 like domains"/>
    <property type="match status" value="1"/>
</dbReference>
<dbReference type="InterPro" id="IPR004328">
    <property type="entry name" value="BRO1_dom"/>
</dbReference>
<dbReference type="InterPro" id="IPR038499">
    <property type="entry name" value="BRO1_sf"/>
</dbReference>
<dbReference type="InterPro" id="IPR038898">
    <property type="entry name" value="BROX"/>
</dbReference>
<dbReference type="PANTHER" id="PTHR23032">
    <property type="entry name" value="BRO1 DOMAIN-CONTAINING PROTEIN BROX"/>
    <property type="match status" value="1"/>
</dbReference>
<dbReference type="PANTHER" id="PTHR23032:SF13">
    <property type="entry name" value="BRO1 DOMAIN-CONTAINING PROTEIN BROX"/>
    <property type="match status" value="1"/>
</dbReference>
<dbReference type="Pfam" id="PF03097">
    <property type="entry name" value="BRO1"/>
    <property type="match status" value="1"/>
</dbReference>
<dbReference type="SMART" id="SM01041">
    <property type="entry name" value="BRO1"/>
    <property type="match status" value="1"/>
</dbReference>
<dbReference type="PROSITE" id="PS51180">
    <property type="entry name" value="BRO1"/>
    <property type="match status" value="1"/>
</dbReference>
<gene>
    <name type="ORF">B0507.2</name>
</gene>
<comment type="similarity">
    <text evidence="2">Belongs to the BROX family.</text>
</comment>
<accession>Q22885</accession>
<name>BROX_CAEEL</name>
<protein>
    <recommendedName>
        <fullName>BRO1 domain-containing protein BROX homolog</fullName>
    </recommendedName>
</protein>
<keyword id="KW-1185">Reference proteome</keyword>
<organism>
    <name type="scientific">Caenorhabditis elegans</name>
    <dbReference type="NCBI Taxonomy" id="6239"/>
    <lineage>
        <taxon>Eukaryota</taxon>
        <taxon>Metazoa</taxon>
        <taxon>Ecdysozoa</taxon>
        <taxon>Nematoda</taxon>
        <taxon>Chromadorea</taxon>
        <taxon>Rhabditida</taxon>
        <taxon>Rhabditina</taxon>
        <taxon>Rhabditomorpha</taxon>
        <taxon>Rhabditoidea</taxon>
        <taxon>Rhabditidae</taxon>
        <taxon>Peloderinae</taxon>
        <taxon>Caenorhabditis</taxon>
    </lineage>
</organism>
<reference key="1">
    <citation type="journal article" date="1998" name="Science">
        <title>Genome sequence of the nematode C. elegans: a platform for investigating biology.</title>
        <authorList>
            <consortium name="The C. elegans sequencing consortium"/>
        </authorList>
    </citation>
    <scope>NUCLEOTIDE SEQUENCE [LARGE SCALE GENOMIC DNA]</scope>
    <source>
        <strain>Bristol N2</strain>
    </source>
</reference>
<feature type="chain" id="PRO_0000304618" description="BRO1 domain-containing protein BROX homolog">
    <location>
        <begin position="1"/>
        <end position="427"/>
    </location>
</feature>
<feature type="domain" description="BRO1" evidence="1">
    <location>
        <begin position="1"/>
        <end position="427"/>
    </location>
</feature>
<evidence type="ECO:0000255" key="1">
    <source>
        <dbReference type="PROSITE-ProRule" id="PRU00526"/>
    </source>
</evidence>
<evidence type="ECO:0000305" key="2"/>